<comment type="catalytic activity">
    <reaction>
        <text>tRNA(Phe) + L-phenylalanine + ATP = L-phenylalanyl-tRNA(Phe) + AMP + diphosphate + H(+)</text>
        <dbReference type="Rhea" id="RHEA:19413"/>
        <dbReference type="Rhea" id="RHEA-COMP:9668"/>
        <dbReference type="Rhea" id="RHEA-COMP:9699"/>
        <dbReference type="ChEBI" id="CHEBI:15378"/>
        <dbReference type="ChEBI" id="CHEBI:30616"/>
        <dbReference type="ChEBI" id="CHEBI:33019"/>
        <dbReference type="ChEBI" id="CHEBI:58095"/>
        <dbReference type="ChEBI" id="CHEBI:78442"/>
        <dbReference type="ChEBI" id="CHEBI:78531"/>
        <dbReference type="ChEBI" id="CHEBI:456215"/>
        <dbReference type="EC" id="6.1.1.20"/>
    </reaction>
</comment>
<comment type="cofactor">
    <cofactor evidence="1">
        <name>Mg(2+)</name>
        <dbReference type="ChEBI" id="CHEBI:18420"/>
    </cofactor>
    <text evidence="1">Binds 2 magnesium ions per tetramer.</text>
</comment>
<comment type="subunit">
    <text evidence="1">Tetramer of two alpha and two beta subunits.</text>
</comment>
<comment type="subcellular location">
    <subcellularLocation>
        <location evidence="1">Cytoplasm</location>
    </subcellularLocation>
</comment>
<comment type="similarity">
    <text evidence="2">Belongs to the phenylalanyl-tRNA synthetase beta subunit family. Type 1 subfamily.</text>
</comment>
<name>SYFB_VIBCH</name>
<feature type="chain" id="PRO_0000126981" description="Phenylalanine--tRNA ligase beta subunit">
    <location>
        <begin position="1"/>
        <end position="795"/>
    </location>
</feature>
<feature type="domain" description="tRNA-binding">
    <location>
        <begin position="39"/>
        <end position="148"/>
    </location>
</feature>
<feature type="domain" description="B5">
    <location>
        <begin position="401"/>
        <end position="476"/>
    </location>
</feature>
<feature type="domain" description="FDX-ACB">
    <location>
        <begin position="701"/>
        <end position="794"/>
    </location>
</feature>
<feature type="binding site" evidence="1">
    <location>
        <position position="454"/>
    </location>
    <ligand>
        <name>Mg(2+)</name>
        <dbReference type="ChEBI" id="CHEBI:18420"/>
        <note>shared with alpha subunit</note>
    </ligand>
</feature>
<feature type="binding site" evidence="1">
    <location>
        <position position="460"/>
    </location>
    <ligand>
        <name>Mg(2+)</name>
        <dbReference type="ChEBI" id="CHEBI:18420"/>
        <note>shared with alpha subunit</note>
    </ligand>
</feature>
<feature type="binding site" evidence="1">
    <location>
        <position position="463"/>
    </location>
    <ligand>
        <name>Mg(2+)</name>
        <dbReference type="ChEBI" id="CHEBI:18420"/>
        <note>shared with alpha subunit</note>
    </ligand>
</feature>
<feature type="binding site" evidence="1">
    <location>
        <position position="464"/>
    </location>
    <ligand>
        <name>Mg(2+)</name>
        <dbReference type="ChEBI" id="CHEBI:18420"/>
        <note>shared with alpha subunit</note>
    </ligand>
</feature>
<protein>
    <recommendedName>
        <fullName>Phenylalanine--tRNA ligase beta subunit</fullName>
        <ecNumber>6.1.1.20</ecNumber>
    </recommendedName>
    <alternativeName>
        <fullName>Phenylalanyl-tRNA synthetase beta subunit</fullName>
        <shortName>PheRS</shortName>
    </alternativeName>
</protein>
<accession>Q9KSN6</accession>
<sequence>MKFSESWLREWVNPAITTDELTHQITMAGLEVDDVLAVAGVFDGVKVGHVVECAQHPDADKLRVTKVDVGEEELLDIVCGAANCRQGLKVAVATVGATLPGDFKIKKAKLRGQPSHGMLCSFSELGIDVESNGIMELAENAPIGMDFRDFLSLNDVTIDVDLTSNRADCFSIRGLAREVGVLNRADVTAPAVNAIVATINDTISIDVKAPAACPRYLGRIVKNVNVQAQTPLWMQEKLRRCGIRSIDPVVDITNFVMLEQGQPMHAFDLAKIEGGIVVRLAEQDEKLTLLDGSEAKLNADTLVIADQQKALAIAGVFGGEHSGVSTDTKDVLLECAFFAPDHIRGRARSYGLHTDSSMRFERGVDYALQHAAMERATQLLVEICGGDVAPVVAAESAADLPKPNQVALRRSKLDKLLGHAIPDADVVEILERLGMQVETTAEGWQATAPTWRFDIAIEQDLVEEVGRIYGYNNIPNQAPVAALNMNLHNEAKLPLKRVRDLLVDRGYQEAITYSFVEPEQQKLVVPGVDALILPNPISAEMSAMRLSLIQGLLNTVVHNQKRQQPRVRLFEYGLRFIPDAAAENGMRQEPMLAGVISGARGEEHWNMETATVDFFDMKGDLEAVLELTAKGKAYSFAATKHPALHPGQAAAIMVDGKAIGVIGTVHPELERKFGLNGRTIVFEIEWNAINTRVIPEAAAISKFPANRRDIALVVDGNIASGDIVEACRVAGGELLKDAKLFDVYVGKGVEEGKKSLAIALTLQSVERTLEEADIAAAVEAIVQAVSAQFGAALRD</sequence>
<organism>
    <name type="scientific">Vibrio cholerae serotype O1 (strain ATCC 39315 / El Tor Inaba N16961)</name>
    <dbReference type="NCBI Taxonomy" id="243277"/>
    <lineage>
        <taxon>Bacteria</taxon>
        <taxon>Pseudomonadati</taxon>
        <taxon>Pseudomonadota</taxon>
        <taxon>Gammaproteobacteria</taxon>
        <taxon>Vibrionales</taxon>
        <taxon>Vibrionaceae</taxon>
        <taxon>Vibrio</taxon>
    </lineage>
</organism>
<dbReference type="EC" id="6.1.1.20"/>
<dbReference type="EMBL" id="AE003852">
    <property type="protein sequence ID" value="AAF94379.1"/>
    <property type="molecule type" value="Genomic_DNA"/>
</dbReference>
<dbReference type="PIR" id="D82225">
    <property type="entry name" value="D82225"/>
</dbReference>
<dbReference type="RefSeq" id="NP_230865.1">
    <property type="nucleotide sequence ID" value="NC_002505.1"/>
</dbReference>
<dbReference type="RefSeq" id="WP_000672448.1">
    <property type="nucleotide sequence ID" value="NZ_LT906614.1"/>
</dbReference>
<dbReference type="SMR" id="Q9KSN6"/>
<dbReference type="STRING" id="243277.VC_1220"/>
<dbReference type="DNASU" id="2614657"/>
<dbReference type="EnsemblBacteria" id="AAF94379">
    <property type="protein sequence ID" value="AAF94379"/>
    <property type="gene ID" value="VC_1220"/>
</dbReference>
<dbReference type="KEGG" id="vch:VC_1220"/>
<dbReference type="PATRIC" id="fig|243277.26.peg.1167"/>
<dbReference type="eggNOG" id="COG0072">
    <property type="taxonomic scope" value="Bacteria"/>
</dbReference>
<dbReference type="eggNOG" id="COG0073">
    <property type="taxonomic scope" value="Bacteria"/>
</dbReference>
<dbReference type="HOGENOM" id="CLU_016891_0_0_6"/>
<dbReference type="Proteomes" id="UP000000584">
    <property type="component" value="Chromosome 1"/>
</dbReference>
<dbReference type="GO" id="GO:0009328">
    <property type="term" value="C:phenylalanine-tRNA ligase complex"/>
    <property type="evidence" value="ECO:0000318"/>
    <property type="project" value="GO_Central"/>
</dbReference>
<dbReference type="GO" id="GO:0005524">
    <property type="term" value="F:ATP binding"/>
    <property type="evidence" value="ECO:0007669"/>
    <property type="project" value="UniProtKB-UniRule"/>
</dbReference>
<dbReference type="GO" id="GO:0000287">
    <property type="term" value="F:magnesium ion binding"/>
    <property type="evidence" value="ECO:0007669"/>
    <property type="project" value="UniProtKB-UniRule"/>
</dbReference>
<dbReference type="GO" id="GO:0004826">
    <property type="term" value="F:phenylalanine-tRNA ligase activity"/>
    <property type="evidence" value="ECO:0007669"/>
    <property type="project" value="UniProtKB-UniRule"/>
</dbReference>
<dbReference type="GO" id="GO:0000049">
    <property type="term" value="F:tRNA binding"/>
    <property type="evidence" value="ECO:0007669"/>
    <property type="project" value="UniProtKB-KW"/>
</dbReference>
<dbReference type="GO" id="GO:0006432">
    <property type="term" value="P:phenylalanyl-tRNA aminoacylation"/>
    <property type="evidence" value="ECO:0000318"/>
    <property type="project" value="GO_Central"/>
</dbReference>
<dbReference type="CDD" id="cd00769">
    <property type="entry name" value="PheRS_beta_core"/>
    <property type="match status" value="1"/>
</dbReference>
<dbReference type="CDD" id="cd02796">
    <property type="entry name" value="tRNA_bind_bactPheRS"/>
    <property type="match status" value="1"/>
</dbReference>
<dbReference type="FunFam" id="2.40.50.140:FF:000045">
    <property type="entry name" value="Phenylalanine--tRNA ligase beta subunit"/>
    <property type="match status" value="1"/>
</dbReference>
<dbReference type="FunFam" id="3.30.56.10:FF:000002">
    <property type="entry name" value="Phenylalanine--tRNA ligase beta subunit"/>
    <property type="match status" value="1"/>
</dbReference>
<dbReference type="FunFam" id="3.30.70.380:FF:000001">
    <property type="entry name" value="Phenylalanine--tRNA ligase beta subunit"/>
    <property type="match status" value="1"/>
</dbReference>
<dbReference type="FunFam" id="3.30.930.10:FF:000022">
    <property type="entry name" value="Phenylalanine--tRNA ligase beta subunit"/>
    <property type="match status" value="1"/>
</dbReference>
<dbReference type="FunFam" id="3.50.40.10:FF:000001">
    <property type="entry name" value="Phenylalanine--tRNA ligase beta subunit"/>
    <property type="match status" value="1"/>
</dbReference>
<dbReference type="Gene3D" id="3.30.56.10">
    <property type="match status" value="2"/>
</dbReference>
<dbReference type="Gene3D" id="3.30.930.10">
    <property type="entry name" value="Bira Bifunctional Protein, Domain 2"/>
    <property type="match status" value="1"/>
</dbReference>
<dbReference type="Gene3D" id="3.30.70.380">
    <property type="entry name" value="Ferrodoxin-fold anticodon-binding domain"/>
    <property type="match status" value="1"/>
</dbReference>
<dbReference type="Gene3D" id="2.40.50.140">
    <property type="entry name" value="Nucleic acid-binding proteins"/>
    <property type="match status" value="1"/>
</dbReference>
<dbReference type="Gene3D" id="3.50.40.10">
    <property type="entry name" value="Phenylalanyl-trna Synthetase, Chain B, domain 3"/>
    <property type="match status" value="1"/>
</dbReference>
<dbReference type="HAMAP" id="MF_00283">
    <property type="entry name" value="Phe_tRNA_synth_beta1"/>
    <property type="match status" value="1"/>
</dbReference>
<dbReference type="InterPro" id="IPR045864">
    <property type="entry name" value="aa-tRNA-synth_II/BPL/LPL"/>
</dbReference>
<dbReference type="InterPro" id="IPR005146">
    <property type="entry name" value="B3/B4_tRNA-bd"/>
</dbReference>
<dbReference type="InterPro" id="IPR009061">
    <property type="entry name" value="DNA-bd_dom_put_sf"/>
</dbReference>
<dbReference type="InterPro" id="IPR005121">
    <property type="entry name" value="Fdx_antiC-bd"/>
</dbReference>
<dbReference type="InterPro" id="IPR036690">
    <property type="entry name" value="Fdx_antiC-bd_sf"/>
</dbReference>
<dbReference type="InterPro" id="IPR012340">
    <property type="entry name" value="NA-bd_OB-fold"/>
</dbReference>
<dbReference type="InterPro" id="IPR045060">
    <property type="entry name" value="Phe-tRNA-ligase_IIc_bsu"/>
</dbReference>
<dbReference type="InterPro" id="IPR004532">
    <property type="entry name" value="Phe-tRNA-ligase_IIc_bsu_bact"/>
</dbReference>
<dbReference type="InterPro" id="IPR020825">
    <property type="entry name" value="Phe-tRNA_synthase-like_B3/B4"/>
</dbReference>
<dbReference type="InterPro" id="IPR041616">
    <property type="entry name" value="PheRS_beta_core"/>
</dbReference>
<dbReference type="InterPro" id="IPR002547">
    <property type="entry name" value="tRNA-bd_dom"/>
</dbReference>
<dbReference type="InterPro" id="IPR033714">
    <property type="entry name" value="tRNA_bind_bactPheRS"/>
</dbReference>
<dbReference type="InterPro" id="IPR005147">
    <property type="entry name" value="tRNA_synthase_B5-dom"/>
</dbReference>
<dbReference type="NCBIfam" id="TIGR00472">
    <property type="entry name" value="pheT_bact"/>
    <property type="match status" value="1"/>
</dbReference>
<dbReference type="NCBIfam" id="NF045760">
    <property type="entry name" value="YtpR"/>
    <property type="match status" value="1"/>
</dbReference>
<dbReference type="PANTHER" id="PTHR10947:SF0">
    <property type="entry name" value="PHENYLALANINE--TRNA LIGASE BETA SUBUNIT"/>
    <property type="match status" value="1"/>
</dbReference>
<dbReference type="PANTHER" id="PTHR10947">
    <property type="entry name" value="PHENYLALANYL-TRNA SYNTHETASE BETA CHAIN AND LEUCINE-RICH REPEAT-CONTAINING PROTEIN 47"/>
    <property type="match status" value="1"/>
</dbReference>
<dbReference type="Pfam" id="PF03483">
    <property type="entry name" value="B3_4"/>
    <property type="match status" value="1"/>
</dbReference>
<dbReference type="Pfam" id="PF03484">
    <property type="entry name" value="B5"/>
    <property type="match status" value="1"/>
</dbReference>
<dbReference type="Pfam" id="PF03147">
    <property type="entry name" value="FDX-ACB"/>
    <property type="match status" value="1"/>
</dbReference>
<dbReference type="Pfam" id="PF01588">
    <property type="entry name" value="tRNA_bind"/>
    <property type="match status" value="1"/>
</dbReference>
<dbReference type="Pfam" id="PF17759">
    <property type="entry name" value="tRNA_synthFbeta"/>
    <property type="match status" value="1"/>
</dbReference>
<dbReference type="SMART" id="SM00873">
    <property type="entry name" value="B3_4"/>
    <property type="match status" value="1"/>
</dbReference>
<dbReference type="SMART" id="SM00874">
    <property type="entry name" value="B5"/>
    <property type="match status" value="1"/>
</dbReference>
<dbReference type="SMART" id="SM00896">
    <property type="entry name" value="FDX-ACB"/>
    <property type="match status" value="1"/>
</dbReference>
<dbReference type="SUPFAM" id="SSF54991">
    <property type="entry name" value="Anticodon-binding domain of PheRS"/>
    <property type="match status" value="1"/>
</dbReference>
<dbReference type="SUPFAM" id="SSF55681">
    <property type="entry name" value="Class II aaRS and biotin synthetases"/>
    <property type="match status" value="1"/>
</dbReference>
<dbReference type="SUPFAM" id="SSF50249">
    <property type="entry name" value="Nucleic acid-binding proteins"/>
    <property type="match status" value="1"/>
</dbReference>
<dbReference type="SUPFAM" id="SSF56037">
    <property type="entry name" value="PheT/TilS domain"/>
    <property type="match status" value="1"/>
</dbReference>
<dbReference type="SUPFAM" id="SSF46955">
    <property type="entry name" value="Putative DNA-binding domain"/>
    <property type="match status" value="1"/>
</dbReference>
<dbReference type="PROSITE" id="PS51483">
    <property type="entry name" value="B5"/>
    <property type="match status" value="1"/>
</dbReference>
<dbReference type="PROSITE" id="PS51447">
    <property type="entry name" value="FDX_ACB"/>
    <property type="match status" value="1"/>
</dbReference>
<dbReference type="PROSITE" id="PS50886">
    <property type="entry name" value="TRBD"/>
    <property type="match status" value="1"/>
</dbReference>
<gene>
    <name type="primary">pheT</name>
    <name type="ordered locus">VC_1220</name>
</gene>
<proteinExistence type="inferred from homology"/>
<evidence type="ECO:0000250" key="1"/>
<evidence type="ECO:0000305" key="2"/>
<reference key="1">
    <citation type="journal article" date="2000" name="Nature">
        <title>DNA sequence of both chromosomes of the cholera pathogen Vibrio cholerae.</title>
        <authorList>
            <person name="Heidelberg J.F."/>
            <person name="Eisen J.A."/>
            <person name="Nelson W.C."/>
            <person name="Clayton R.A."/>
            <person name="Gwinn M.L."/>
            <person name="Dodson R.J."/>
            <person name="Haft D.H."/>
            <person name="Hickey E.K."/>
            <person name="Peterson J.D."/>
            <person name="Umayam L.A."/>
            <person name="Gill S.R."/>
            <person name="Nelson K.E."/>
            <person name="Read T.D."/>
            <person name="Tettelin H."/>
            <person name="Richardson D.L."/>
            <person name="Ermolaeva M.D."/>
            <person name="Vamathevan J.J."/>
            <person name="Bass S."/>
            <person name="Qin H."/>
            <person name="Dragoi I."/>
            <person name="Sellers P."/>
            <person name="McDonald L.A."/>
            <person name="Utterback T.R."/>
            <person name="Fleischmann R.D."/>
            <person name="Nierman W.C."/>
            <person name="White O."/>
            <person name="Salzberg S.L."/>
            <person name="Smith H.O."/>
            <person name="Colwell R.R."/>
            <person name="Mekalanos J.J."/>
            <person name="Venter J.C."/>
            <person name="Fraser C.M."/>
        </authorList>
    </citation>
    <scope>NUCLEOTIDE SEQUENCE [LARGE SCALE GENOMIC DNA]</scope>
    <source>
        <strain>ATCC 39315 / El Tor Inaba N16961</strain>
    </source>
</reference>
<keyword id="KW-0030">Aminoacyl-tRNA synthetase</keyword>
<keyword id="KW-0067">ATP-binding</keyword>
<keyword id="KW-0963">Cytoplasm</keyword>
<keyword id="KW-0436">Ligase</keyword>
<keyword id="KW-0460">Magnesium</keyword>
<keyword id="KW-0479">Metal-binding</keyword>
<keyword id="KW-0547">Nucleotide-binding</keyword>
<keyword id="KW-0648">Protein biosynthesis</keyword>
<keyword id="KW-1185">Reference proteome</keyword>
<keyword id="KW-0694">RNA-binding</keyword>
<keyword id="KW-0820">tRNA-binding</keyword>